<keyword id="KW-1003">Cell membrane</keyword>
<keyword id="KW-0407">Ion channel</keyword>
<keyword id="KW-0406">Ion transport</keyword>
<keyword id="KW-0472">Membrane</keyword>
<keyword id="KW-1185">Reference proteome</keyword>
<keyword id="KW-0812">Transmembrane</keyword>
<keyword id="KW-1133">Transmembrane helix</keyword>
<keyword id="KW-0813">Transport</keyword>
<dbReference type="EMBL" id="BA000028">
    <property type="protein sequence ID" value="BAC12977.1"/>
    <property type="molecule type" value="Genomic_DNA"/>
</dbReference>
<dbReference type="RefSeq" id="WP_011065423.1">
    <property type="nucleotide sequence ID" value="NC_004193.1"/>
</dbReference>
<dbReference type="SMR" id="Q8CUT6"/>
<dbReference type="STRING" id="221109.gene:10733259"/>
<dbReference type="KEGG" id="oih:OB1021"/>
<dbReference type="eggNOG" id="COG1970">
    <property type="taxonomic scope" value="Bacteria"/>
</dbReference>
<dbReference type="HOGENOM" id="CLU_095787_0_0_9"/>
<dbReference type="OrthoDB" id="9810350at2"/>
<dbReference type="PhylomeDB" id="Q8CUT6"/>
<dbReference type="Proteomes" id="UP000000822">
    <property type="component" value="Chromosome"/>
</dbReference>
<dbReference type="GO" id="GO:0005886">
    <property type="term" value="C:plasma membrane"/>
    <property type="evidence" value="ECO:0007669"/>
    <property type="project" value="UniProtKB-SubCell"/>
</dbReference>
<dbReference type="GO" id="GO:0008381">
    <property type="term" value="F:mechanosensitive monoatomic ion channel activity"/>
    <property type="evidence" value="ECO:0007669"/>
    <property type="project" value="UniProtKB-UniRule"/>
</dbReference>
<dbReference type="Gene3D" id="1.10.1200.120">
    <property type="entry name" value="Large-conductance mechanosensitive channel, MscL, domain 1"/>
    <property type="match status" value="1"/>
</dbReference>
<dbReference type="HAMAP" id="MF_00115">
    <property type="entry name" value="MscL"/>
    <property type="match status" value="1"/>
</dbReference>
<dbReference type="InterPro" id="IPR019823">
    <property type="entry name" value="Mechanosensitive_channel_CS"/>
</dbReference>
<dbReference type="InterPro" id="IPR001185">
    <property type="entry name" value="MS_channel"/>
</dbReference>
<dbReference type="InterPro" id="IPR037673">
    <property type="entry name" value="MSC/AndL"/>
</dbReference>
<dbReference type="InterPro" id="IPR036019">
    <property type="entry name" value="MscL_channel"/>
</dbReference>
<dbReference type="NCBIfam" id="TIGR00220">
    <property type="entry name" value="mscL"/>
    <property type="match status" value="1"/>
</dbReference>
<dbReference type="NCBIfam" id="NF001843">
    <property type="entry name" value="PRK00567.1-4"/>
    <property type="match status" value="1"/>
</dbReference>
<dbReference type="NCBIfam" id="NF010560">
    <property type="entry name" value="PRK13955.1"/>
    <property type="match status" value="1"/>
</dbReference>
<dbReference type="PANTHER" id="PTHR30266:SF2">
    <property type="entry name" value="LARGE-CONDUCTANCE MECHANOSENSITIVE CHANNEL"/>
    <property type="match status" value="1"/>
</dbReference>
<dbReference type="PANTHER" id="PTHR30266">
    <property type="entry name" value="MECHANOSENSITIVE CHANNEL MSCL"/>
    <property type="match status" value="1"/>
</dbReference>
<dbReference type="Pfam" id="PF01741">
    <property type="entry name" value="MscL"/>
    <property type="match status" value="1"/>
</dbReference>
<dbReference type="PRINTS" id="PR01264">
    <property type="entry name" value="MECHCHANNEL"/>
</dbReference>
<dbReference type="SUPFAM" id="SSF81330">
    <property type="entry name" value="Gated mechanosensitive channel"/>
    <property type="match status" value="1"/>
</dbReference>
<dbReference type="PROSITE" id="PS01327">
    <property type="entry name" value="MSCL"/>
    <property type="match status" value="1"/>
</dbReference>
<name>MSCL_OCEIH</name>
<evidence type="ECO:0000255" key="1">
    <source>
        <dbReference type="HAMAP-Rule" id="MF_00115"/>
    </source>
</evidence>
<reference key="1">
    <citation type="journal article" date="2002" name="Nucleic Acids Res.">
        <title>Genome sequence of Oceanobacillus iheyensis isolated from the Iheya Ridge and its unexpected adaptive capabilities to extreme environments.</title>
        <authorList>
            <person name="Takami H."/>
            <person name="Takaki Y."/>
            <person name="Uchiyama I."/>
        </authorList>
    </citation>
    <scope>NUCLEOTIDE SEQUENCE [LARGE SCALE GENOMIC DNA]</scope>
    <source>
        <strain>DSM 14371 / CIP 107618 / JCM 11309 / KCTC 3954 / HTE831</strain>
    </source>
</reference>
<organism>
    <name type="scientific">Oceanobacillus iheyensis (strain DSM 14371 / CIP 107618 / JCM 11309 / KCTC 3954 / HTE831)</name>
    <dbReference type="NCBI Taxonomy" id="221109"/>
    <lineage>
        <taxon>Bacteria</taxon>
        <taxon>Bacillati</taxon>
        <taxon>Bacillota</taxon>
        <taxon>Bacilli</taxon>
        <taxon>Bacillales</taxon>
        <taxon>Bacillaceae</taxon>
        <taxon>Oceanobacillus</taxon>
    </lineage>
</organism>
<gene>
    <name evidence="1" type="primary">mscL</name>
    <name type="ordered locus">OB1021</name>
</gene>
<protein>
    <recommendedName>
        <fullName evidence="1">Large-conductance mechanosensitive channel</fullName>
    </recommendedName>
</protein>
<comment type="function">
    <text evidence="1">Channel that opens in response to stretch forces in the membrane lipid bilayer. May participate in the regulation of osmotic pressure changes within the cell.</text>
</comment>
<comment type="subunit">
    <text evidence="1">Homopentamer.</text>
</comment>
<comment type="subcellular location">
    <subcellularLocation>
        <location evidence="1">Cell membrane</location>
        <topology evidence="1">Multi-pass membrane protein</topology>
    </subcellularLocation>
</comment>
<comment type="similarity">
    <text evidence="1">Belongs to the MscL family.</text>
</comment>
<accession>Q8CUT6</accession>
<feature type="chain" id="PRO_0000238015" description="Large-conductance mechanosensitive channel">
    <location>
        <begin position="1"/>
        <end position="130"/>
    </location>
</feature>
<feature type="transmembrane region" description="Helical" evidence="1">
    <location>
        <begin position="14"/>
        <end position="34"/>
    </location>
</feature>
<feature type="transmembrane region" description="Helical" evidence="1">
    <location>
        <begin position="73"/>
        <end position="93"/>
    </location>
</feature>
<sequence>MWKEFKEFAFKGNIIDLAVAVVIGGAFGAIVTSFVENIITPLMGVIVGGVDFTTLKVTVGEAEILYGNFIQSFVDFIIIAFSIFLAIKFLVKFKRQKEEEEVEAVVEELSKQEELLTEIRDLLKEQSNKN</sequence>
<proteinExistence type="inferred from homology"/>